<evidence type="ECO:0000255" key="1">
    <source>
        <dbReference type="HAMAP-Rule" id="MF_00097"/>
    </source>
</evidence>
<reference key="1">
    <citation type="journal article" date="2007" name="Nat. Biotechnol.">
        <title>Comparative analysis of the complete genome sequence of the plant growth-promoting bacterium Bacillus amyloliquefaciens FZB42.</title>
        <authorList>
            <person name="Chen X.H."/>
            <person name="Koumoutsi A."/>
            <person name="Scholz R."/>
            <person name="Eisenreich A."/>
            <person name="Schneider K."/>
            <person name="Heinemeyer I."/>
            <person name="Morgenstern B."/>
            <person name="Voss B."/>
            <person name="Hess W.R."/>
            <person name="Reva O."/>
            <person name="Junge H."/>
            <person name="Voigt B."/>
            <person name="Jungblut P.R."/>
            <person name="Vater J."/>
            <person name="Suessmuth R."/>
            <person name="Liesegang H."/>
            <person name="Strittmatter A."/>
            <person name="Gottschalk G."/>
            <person name="Borriss R."/>
        </authorList>
    </citation>
    <scope>NUCLEOTIDE SEQUENCE [LARGE SCALE GENOMIC DNA]</scope>
    <source>
        <strain>DSM 23117 / BGSC 10A6 / LMG 26770 / FZB42</strain>
    </source>
</reference>
<accession>A7ZA58</accession>
<dbReference type="EC" id="2.5.1.3" evidence="1"/>
<dbReference type="EMBL" id="CP000560">
    <property type="protein sequence ID" value="ABS75884.1"/>
    <property type="molecule type" value="Genomic_DNA"/>
</dbReference>
<dbReference type="RefSeq" id="WP_012118751.1">
    <property type="nucleotide sequence ID" value="NC_009725.2"/>
</dbReference>
<dbReference type="SMR" id="A7ZA58"/>
<dbReference type="GeneID" id="93082697"/>
<dbReference type="KEGG" id="bay:RBAM_035550"/>
<dbReference type="HOGENOM" id="CLU_018272_3_2_9"/>
<dbReference type="UniPathway" id="UPA00060">
    <property type="reaction ID" value="UER00141"/>
</dbReference>
<dbReference type="Proteomes" id="UP000001120">
    <property type="component" value="Chromosome"/>
</dbReference>
<dbReference type="GO" id="GO:0005737">
    <property type="term" value="C:cytoplasm"/>
    <property type="evidence" value="ECO:0007669"/>
    <property type="project" value="TreeGrafter"/>
</dbReference>
<dbReference type="GO" id="GO:0000287">
    <property type="term" value="F:magnesium ion binding"/>
    <property type="evidence" value="ECO:0007669"/>
    <property type="project" value="UniProtKB-UniRule"/>
</dbReference>
<dbReference type="GO" id="GO:0004789">
    <property type="term" value="F:thiamine-phosphate diphosphorylase activity"/>
    <property type="evidence" value="ECO:0007669"/>
    <property type="project" value="UniProtKB-UniRule"/>
</dbReference>
<dbReference type="GO" id="GO:0009228">
    <property type="term" value="P:thiamine biosynthetic process"/>
    <property type="evidence" value="ECO:0007669"/>
    <property type="project" value="UniProtKB-KW"/>
</dbReference>
<dbReference type="GO" id="GO:0009229">
    <property type="term" value="P:thiamine diphosphate biosynthetic process"/>
    <property type="evidence" value="ECO:0007669"/>
    <property type="project" value="UniProtKB-UniRule"/>
</dbReference>
<dbReference type="CDD" id="cd00564">
    <property type="entry name" value="TMP_TenI"/>
    <property type="match status" value="1"/>
</dbReference>
<dbReference type="FunFam" id="3.20.20.70:FF:000096">
    <property type="entry name" value="Thiamine-phosphate synthase"/>
    <property type="match status" value="1"/>
</dbReference>
<dbReference type="Gene3D" id="3.20.20.70">
    <property type="entry name" value="Aldolase class I"/>
    <property type="match status" value="1"/>
</dbReference>
<dbReference type="HAMAP" id="MF_00097">
    <property type="entry name" value="TMP_synthase"/>
    <property type="match status" value="1"/>
</dbReference>
<dbReference type="InterPro" id="IPR013785">
    <property type="entry name" value="Aldolase_TIM"/>
</dbReference>
<dbReference type="InterPro" id="IPR036206">
    <property type="entry name" value="ThiamineP_synth_sf"/>
</dbReference>
<dbReference type="InterPro" id="IPR022998">
    <property type="entry name" value="ThiamineP_synth_TenI"/>
</dbReference>
<dbReference type="InterPro" id="IPR034291">
    <property type="entry name" value="TMP_synthase"/>
</dbReference>
<dbReference type="NCBIfam" id="TIGR00693">
    <property type="entry name" value="thiE"/>
    <property type="match status" value="1"/>
</dbReference>
<dbReference type="PANTHER" id="PTHR20857">
    <property type="entry name" value="THIAMINE-PHOSPHATE PYROPHOSPHORYLASE"/>
    <property type="match status" value="1"/>
</dbReference>
<dbReference type="PANTHER" id="PTHR20857:SF15">
    <property type="entry name" value="THIAMINE-PHOSPHATE SYNTHASE"/>
    <property type="match status" value="1"/>
</dbReference>
<dbReference type="Pfam" id="PF02581">
    <property type="entry name" value="TMP-TENI"/>
    <property type="match status" value="1"/>
</dbReference>
<dbReference type="SUPFAM" id="SSF51391">
    <property type="entry name" value="Thiamin phosphate synthase"/>
    <property type="match status" value="1"/>
</dbReference>
<proteinExistence type="inferred from homology"/>
<name>THIE_BACVZ</name>
<keyword id="KW-0460">Magnesium</keyword>
<keyword id="KW-0479">Metal-binding</keyword>
<keyword id="KW-0784">Thiamine biosynthesis</keyword>
<keyword id="KW-0808">Transferase</keyword>
<gene>
    <name evidence="1" type="primary">thiE</name>
    <name type="ordered locus">RBAM_035550</name>
</gene>
<sequence length="224" mass="23810">MTRISREMMKDMLSVYFIMGSNNTSADPVSVVEKAIEGGATLFQFREKGSGSLTGEERLLFAKRVQDVCRQAGIPFIINDDVELALRLEADGVHIGQDDADAEETRAAIGDMILGVSAHNVSEVKRAEAAGADYVGMGPVYPTETKKDAEAVQGVTLIEEVRRQGITIPIVGIGGITADNAAPVIEAGADGVSMISAISQAEDPKAAARKFSEEIRRSKAGLSR</sequence>
<feature type="chain" id="PRO_1000008122" description="Thiamine-phosphate synthase">
    <location>
        <begin position="1"/>
        <end position="224"/>
    </location>
</feature>
<feature type="binding site" evidence="1">
    <location>
        <begin position="44"/>
        <end position="48"/>
    </location>
    <ligand>
        <name>4-amino-2-methyl-5-(diphosphooxymethyl)pyrimidine</name>
        <dbReference type="ChEBI" id="CHEBI:57841"/>
    </ligand>
</feature>
<feature type="binding site" evidence="1">
    <location>
        <position position="79"/>
    </location>
    <ligand>
        <name>4-amino-2-methyl-5-(diphosphooxymethyl)pyrimidine</name>
        <dbReference type="ChEBI" id="CHEBI:57841"/>
    </ligand>
</feature>
<feature type="binding site" evidence="1">
    <location>
        <position position="80"/>
    </location>
    <ligand>
        <name>Mg(2+)</name>
        <dbReference type="ChEBI" id="CHEBI:18420"/>
    </ligand>
</feature>
<feature type="binding site" evidence="1">
    <location>
        <position position="99"/>
    </location>
    <ligand>
        <name>Mg(2+)</name>
        <dbReference type="ChEBI" id="CHEBI:18420"/>
    </ligand>
</feature>
<feature type="binding site" evidence="1">
    <location>
        <position position="117"/>
    </location>
    <ligand>
        <name>4-amino-2-methyl-5-(diphosphooxymethyl)pyrimidine</name>
        <dbReference type="ChEBI" id="CHEBI:57841"/>
    </ligand>
</feature>
<feature type="binding site" evidence="1">
    <location>
        <begin position="143"/>
        <end position="145"/>
    </location>
    <ligand>
        <name>2-[(2R,5Z)-2-carboxy-4-methylthiazol-5(2H)-ylidene]ethyl phosphate</name>
        <dbReference type="ChEBI" id="CHEBI:62899"/>
    </ligand>
</feature>
<feature type="binding site" evidence="1">
    <location>
        <position position="146"/>
    </location>
    <ligand>
        <name>4-amino-2-methyl-5-(diphosphooxymethyl)pyrimidine</name>
        <dbReference type="ChEBI" id="CHEBI:57841"/>
    </ligand>
</feature>
<feature type="binding site" evidence="1">
    <location>
        <position position="175"/>
    </location>
    <ligand>
        <name>2-[(2R,5Z)-2-carboxy-4-methylthiazol-5(2H)-ylidene]ethyl phosphate</name>
        <dbReference type="ChEBI" id="CHEBI:62899"/>
    </ligand>
</feature>
<feature type="binding site" evidence="1">
    <location>
        <begin position="195"/>
        <end position="196"/>
    </location>
    <ligand>
        <name>2-[(2R,5Z)-2-carboxy-4-methylthiazol-5(2H)-ylidene]ethyl phosphate</name>
        <dbReference type="ChEBI" id="CHEBI:62899"/>
    </ligand>
</feature>
<protein>
    <recommendedName>
        <fullName evidence="1">Thiamine-phosphate synthase</fullName>
        <shortName evidence="1">TP synthase</shortName>
        <shortName evidence="1">TPS</shortName>
        <ecNumber evidence="1">2.5.1.3</ecNumber>
    </recommendedName>
    <alternativeName>
        <fullName evidence="1">Thiamine-phosphate pyrophosphorylase</fullName>
        <shortName evidence="1">TMP pyrophosphorylase</shortName>
        <shortName evidence="1">TMP-PPase</shortName>
    </alternativeName>
</protein>
<comment type="function">
    <text evidence="1">Condenses 4-methyl-5-(beta-hydroxyethyl)thiazole monophosphate (THZ-P) and 2-methyl-4-amino-5-hydroxymethyl pyrimidine pyrophosphate (HMP-PP) to form thiamine monophosphate (TMP).</text>
</comment>
<comment type="catalytic activity">
    <reaction evidence="1">
        <text>2-[(2R,5Z)-2-carboxy-4-methylthiazol-5(2H)-ylidene]ethyl phosphate + 4-amino-2-methyl-5-(diphosphooxymethyl)pyrimidine + 2 H(+) = thiamine phosphate + CO2 + diphosphate</text>
        <dbReference type="Rhea" id="RHEA:47844"/>
        <dbReference type="ChEBI" id="CHEBI:15378"/>
        <dbReference type="ChEBI" id="CHEBI:16526"/>
        <dbReference type="ChEBI" id="CHEBI:33019"/>
        <dbReference type="ChEBI" id="CHEBI:37575"/>
        <dbReference type="ChEBI" id="CHEBI:57841"/>
        <dbReference type="ChEBI" id="CHEBI:62899"/>
        <dbReference type="EC" id="2.5.1.3"/>
    </reaction>
</comment>
<comment type="catalytic activity">
    <reaction evidence="1">
        <text>2-(2-carboxy-4-methylthiazol-5-yl)ethyl phosphate + 4-amino-2-methyl-5-(diphosphooxymethyl)pyrimidine + 2 H(+) = thiamine phosphate + CO2 + diphosphate</text>
        <dbReference type="Rhea" id="RHEA:47848"/>
        <dbReference type="ChEBI" id="CHEBI:15378"/>
        <dbReference type="ChEBI" id="CHEBI:16526"/>
        <dbReference type="ChEBI" id="CHEBI:33019"/>
        <dbReference type="ChEBI" id="CHEBI:37575"/>
        <dbReference type="ChEBI" id="CHEBI:57841"/>
        <dbReference type="ChEBI" id="CHEBI:62890"/>
        <dbReference type="EC" id="2.5.1.3"/>
    </reaction>
</comment>
<comment type="catalytic activity">
    <reaction evidence="1">
        <text>4-methyl-5-(2-phosphooxyethyl)-thiazole + 4-amino-2-methyl-5-(diphosphooxymethyl)pyrimidine + H(+) = thiamine phosphate + diphosphate</text>
        <dbReference type="Rhea" id="RHEA:22328"/>
        <dbReference type="ChEBI" id="CHEBI:15378"/>
        <dbReference type="ChEBI" id="CHEBI:33019"/>
        <dbReference type="ChEBI" id="CHEBI:37575"/>
        <dbReference type="ChEBI" id="CHEBI:57841"/>
        <dbReference type="ChEBI" id="CHEBI:58296"/>
        <dbReference type="EC" id="2.5.1.3"/>
    </reaction>
</comment>
<comment type="cofactor">
    <cofactor evidence="1">
        <name>Mg(2+)</name>
        <dbReference type="ChEBI" id="CHEBI:18420"/>
    </cofactor>
    <text evidence="1">Binds 1 Mg(2+) ion per subunit.</text>
</comment>
<comment type="pathway">
    <text evidence="1">Cofactor biosynthesis; thiamine diphosphate biosynthesis; thiamine phosphate from 4-amino-2-methyl-5-diphosphomethylpyrimidine and 4-methyl-5-(2-phosphoethyl)-thiazole: step 1/1.</text>
</comment>
<comment type="similarity">
    <text evidence="1">Belongs to the thiamine-phosphate synthase family.</text>
</comment>
<organism>
    <name type="scientific">Bacillus velezensis (strain DSM 23117 / BGSC 10A6 / LMG 26770 / FZB42)</name>
    <name type="common">Bacillus amyloliquefaciens subsp. plantarum</name>
    <dbReference type="NCBI Taxonomy" id="326423"/>
    <lineage>
        <taxon>Bacteria</taxon>
        <taxon>Bacillati</taxon>
        <taxon>Bacillota</taxon>
        <taxon>Bacilli</taxon>
        <taxon>Bacillales</taxon>
        <taxon>Bacillaceae</taxon>
        <taxon>Bacillus</taxon>
        <taxon>Bacillus amyloliquefaciens group</taxon>
    </lineage>
</organism>